<organism>
    <name type="scientific">Bartonella bacilliformis (strain ATCC 35685 / KC583 / Herrer 020/F12,63)</name>
    <dbReference type="NCBI Taxonomy" id="360095"/>
    <lineage>
        <taxon>Bacteria</taxon>
        <taxon>Pseudomonadati</taxon>
        <taxon>Pseudomonadota</taxon>
        <taxon>Alphaproteobacteria</taxon>
        <taxon>Hyphomicrobiales</taxon>
        <taxon>Bartonellaceae</taxon>
        <taxon>Bartonella</taxon>
    </lineage>
</organism>
<evidence type="ECO:0000255" key="1">
    <source>
        <dbReference type="HAMAP-Rule" id="MF_00938"/>
    </source>
</evidence>
<evidence type="ECO:0000305" key="2"/>
<reference key="1">
    <citation type="journal article" date="1998" name="Antimicrob. Agents Chemother.">
        <title>Mutations in Bartonella bacilliformis gyrB confer resistance to coumermycin A1.</title>
        <authorList>
            <person name="Battisti J.M."/>
            <person name="Smitherman L.S."/>
            <person name="Samuels D.S."/>
            <person name="Minnick M.F."/>
        </authorList>
    </citation>
    <scope>NUCLEOTIDE SEQUENCE [GENOMIC DNA]</scope>
</reference>
<reference key="2">
    <citation type="submission" date="2006-12" db="EMBL/GenBank/DDBJ databases">
        <authorList>
            <person name="Hendrix L."/>
            <person name="Mohamoud Y."/>
            <person name="Radune D."/>
            <person name="Shvartsbeyn A."/>
            <person name="Daugherty S."/>
            <person name="Dodson R."/>
            <person name="Durkin A.S."/>
            <person name="Harkins D."/>
            <person name="Huot H."/>
            <person name="Kothari S.P."/>
            <person name="Madupu R."/>
            <person name="Li J."/>
            <person name="Nelson W.C."/>
            <person name="Shrivastava S."/>
            <person name="Giglio M.G."/>
            <person name="Haft D."/>
            <person name="Selengut J."/>
            <person name="Fraser-Ligget C."/>
            <person name="Seshadri R."/>
        </authorList>
    </citation>
    <scope>NUCLEOTIDE SEQUENCE [LARGE SCALE GENOMIC DNA]</scope>
    <source>
        <strain>ATCC 35685 / KC583 / Herrer 020/F12,63</strain>
    </source>
</reference>
<sequence>MSNDNKDLFSVLNHAQSRIDRKENTQYTSAHSEIVVPAVPLSSPHHHKEDSTYNASSIRILEGLEPVRLRPGMYIGGTDSKALHHLFSEIIDNAMDEAVAGYADLIDITLDSNNYLTVTDNGRGIPIENHPQIPDKSTLEVIMTHLHSGGKFDGKAYQTSGGLHGVGISVVNALSDDMEVEVARERKLYRQRFSRGIPQSGLEELGDVYNRRGTRVCFHPDSQIFGENTAFDPEKIYKIARSKAYLFNGVKIRWNCDPAALKDAKNIPEKDVFYFPDGLKDYLSLSLKNKHLVTAEIFSGKTQQLSGHGSVEWAIAWHNGDAYIQSYCNTIPTEEGGTHETGLRQTLLRGLKAYAELIGNKRASIITSDDVMASTVVMLSVFIKDPQFVGQTKDRLATTEAQRIVENAIRDPFDHWLANSPHEATKLLNWVIERAEERLKRRQDREINRKTAVRKLRLPGKLADCSQNSAAGAELFIVEGDSAGGSAKQARNRTNQAILPLRGKILNVASAAREKMSSSQTIADLILALGCGTRSKYREEDLRYERIIIMTDADVDGAHIASLLITFFFQEIPDLIRAGHLYLAVPPLYRISQGGKVAYARDDSHKDELLKTEFTGKGKIEIGRFKGLGEMRAEQLKETTMNPKKRTLLRVSIDTFEMQETKETVQNLMGTKPEERFRFIQESSTFANNLDI</sequence>
<name>PARE_BARBK</name>
<proteinExistence type="inferred from homology"/>
<comment type="function">
    <text evidence="1">Topoisomerase IV is essential for chromosome segregation. It relaxes supercoiled DNA. Performs the decatenation events required during the replication of a circular DNA molecule.</text>
</comment>
<comment type="catalytic activity">
    <reaction evidence="1">
        <text>ATP-dependent breakage, passage and rejoining of double-stranded DNA.</text>
        <dbReference type="EC" id="5.6.2.2"/>
    </reaction>
</comment>
<comment type="cofactor">
    <cofactor evidence="1">
        <name>Mg(2+)</name>
        <dbReference type="ChEBI" id="CHEBI:18420"/>
    </cofactor>
    <cofactor evidence="1">
        <name>Mn(2+)</name>
        <dbReference type="ChEBI" id="CHEBI:29035"/>
    </cofactor>
    <cofactor evidence="1">
        <name>Ca(2+)</name>
        <dbReference type="ChEBI" id="CHEBI:29108"/>
    </cofactor>
    <text evidence="1">Binds two Mg(2+) per subunit. The magnesium ions form salt bridges with both the protein and the DNA. Can also accept other divalent metal cations, such as Mn(2+) or Ca(2+).</text>
</comment>
<comment type="subunit">
    <text evidence="1">Heterotetramer composed of ParC and ParE.</text>
</comment>
<comment type="similarity">
    <text evidence="1">Belongs to the type II topoisomerase family. ParE type 1 subfamily.</text>
</comment>
<comment type="caution">
    <text evidence="2">Annotated as gyrB by PubMed:9797224 but is probably parE.</text>
</comment>
<dbReference type="EC" id="5.6.2.2" evidence="1"/>
<dbReference type="EMBL" id="U82225">
    <property type="protein sequence ID" value="AAC71079.1"/>
    <property type="molecule type" value="Genomic_DNA"/>
</dbReference>
<dbReference type="EMBL" id="CP000524">
    <property type="protein sequence ID" value="ABM45344.1"/>
    <property type="molecule type" value="Genomic_DNA"/>
</dbReference>
<dbReference type="RefSeq" id="WP_005767325.1">
    <property type="nucleotide sequence ID" value="NC_008783.1"/>
</dbReference>
<dbReference type="SMR" id="P94281"/>
<dbReference type="STRING" id="360095.BARBAKC583_0899"/>
<dbReference type="GeneID" id="4684565"/>
<dbReference type="KEGG" id="bbk:BARBAKC583_0899"/>
<dbReference type="PATRIC" id="fig|360095.6.peg.875"/>
<dbReference type="eggNOG" id="COG0187">
    <property type="taxonomic scope" value="Bacteria"/>
</dbReference>
<dbReference type="HOGENOM" id="CLU_006146_4_1_5"/>
<dbReference type="OrthoDB" id="9802808at2"/>
<dbReference type="Proteomes" id="UP000000643">
    <property type="component" value="Chromosome"/>
</dbReference>
<dbReference type="GO" id="GO:0005694">
    <property type="term" value="C:chromosome"/>
    <property type="evidence" value="ECO:0007669"/>
    <property type="project" value="InterPro"/>
</dbReference>
<dbReference type="GO" id="GO:0005524">
    <property type="term" value="F:ATP binding"/>
    <property type="evidence" value="ECO:0007669"/>
    <property type="project" value="UniProtKB-UniRule"/>
</dbReference>
<dbReference type="GO" id="GO:0003677">
    <property type="term" value="F:DNA binding"/>
    <property type="evidence" value="ECO:0007669"/>
    <property type="project" value="UniProtKB-UniRule"/>
</dbReference>
<dbReference type="GO" id="GO:0003918">
    <property type="term" value="F:DNA topoisomerase type II (double strand cut, ATP-hydrolyzing) activity"/>
    <property type="evidence" value="ECO:0007669"/>
    <property type="project" value="UniProtKB-UniRule"/>
</dbReference>
<dbReference type="GO" id="GO:0046872">
    <property type="term" value="F:metal ion binding"/>
    <property type="evidence" value="ECO:0007669"/>
    <property type="project" value="UniProtKB-KW"/>
</dbReference>
<dbReference type="GO" id="GO:0007059">
    <property type="term" value="P:chromosome segregation"/>
    <property type="evidence" value="ECO:0007669"/>
    <property type="project" value="UniProtKB-UniRule"/>
</dbReference>
<dbReference type="GO" id="GO:0006265">
    <property type="term" value="P:DNA topological change"/>
    <property type="evidence" value="ECO:0007669"/>
    <property type="project" value="UniProtKB-UniRule"/>
</dbReference>
<dbReference type="GO" id="GO:0046677">
    <property type="term" value="P:response to antibiotic"/>
    <property type="evidence" value="ECO:0007669"/>
    <property type="project" value="UniProtKB-KW"/>
</dbReference>
<dbReference type="CDD" id="cd16928">
    <property type="entry name" value="HATPase_GyrB-like"/>
    <property type="match status" value="1"/>
</dbReference>
<dbReference type="CDD" id="cd00822">
    <property type="entry name" value="TopoII_Trans_DNA_gyrase"/>
    <property type="match status" value="1"/>
</dbReference>
<dbReference type="FunFam" id="3.30.565.10:FF:000002">
    <property type="entry name" value="DNA gyrase subunit B"/>
    <property type="match status" value="1"/>
</dbReference>
<dbReference type="FunFam" id="3.40.50.670:FF:000006">
    <property type="entry name" value="DNA topoisomerase (ATP-hydrolyzing)"/>
    <property type="match status" value="1"/>
</dbReference>
<dbReference type="FunFam" id="3.30.230.10:FF:000047">
    <property type="entry name" value="DNA topoisomerase 4 subunit B"/>
    <property type="match status" value="1"/>
</dbReference>
<dbReference type="Gene3D" id="3.30.230.10">
    <property type="match status" value="1"/>
</dbReference>
<dbReference type="Gene3D" id="3.40.50.670">
    <property type="match status" value="1"/>
</dbReference>
<dbReference type="Gene3D" id="3.30.565.10">
    <property type="entry name" value="Histidine kinase-like ATPase, C-terminal domain"/>
    <property type="match status" value="1"/>
</dbReference>
<dbReference type="HAMAP" id="MF_00938">
    <property type="entry name" value="ParE_type1"/>
    <property type="match status" value="1"/>
</dbReference>
<dbReference type="InterPro" id="IPR002288">
    <property type="entry name" value="DNA_gyrase_B_C"/>
</dbReference>
<dbReference type="InterPro" id="IPR036890">
    <property type="entry name" value="HATPase_C_sf"/>
</dbReference>
<dbReference type="InterPro" id="IPR020568">
    <property type="entry name" value="Ribosomal_Su5_D2-typ_SF"/>
</dbReference>
<dbReference type="InterPro" id="IPR014721">
    <property type="entry name" value="Ribsml_uS5_D2-typ_fold_subgr"/>
</dbReference>
<dbReference type="InterPro" id="IPR001241">
    <property type="entry name" value="Topo_IIA"/>
</dbReference>
<dbReference type="InterPro" id="IPR013760">
    <property type="entry name" value="Topo_IIA-like_dom_sf"/>
</dbReference>
<dbReference type="InterPro" id="IPR000565">
    <property type="entry name" value="Topo_IIA_B"/>
</dbReference>
<dbReference type="InterPro" id="IPR013759">
    <property type="entry name" value="Topo_IIA_B_C"/>
</dbReference>
<dbReference type="InterPro" id="IPR013506">
    <property type="entry name" value="Topo_IIA_bsu_dom2"/>
</dbReference>
<dbReference type="InterPro" id="IPR018522">
    <property type="entry name" value="TopoIIA_CS"/>
</dbReference>
<dbReference type="InterPro" id="IPR005737">
    <property type="entry name" value="TopoIV_B_Gneg"/>
</dbReference>
<dbReference type="InterPro" id="IPR006171">
    <property type="entry name" value="TOPRIM_dom"/>
</dbReference>
<dbReference type="NCBIfam" id="TIGR01055">
    <property type="entry name" value="parE_Gneg"/>
    <property type="match status" value="1"/>
</dbReference>
<dbReference type="PANTHER" id="PTHR45866">
    <property type="entry name" value="DNA GYRASE/TOPOISOMERASE SUBUNIT B"/>
    <property type="match status" value="1"/>
</dbReference>
<dbReference type="PANTHER" id="PTHR45866:SF4">
    <property type="entry name" value="DNA TOPOISOMERASE 4 SUBUNIT B"/>
    <property type="match status" value="1"/>
</dbReference>
<dbReference type="Pfam" id="PF00204">
    <property type="entry name" value="DNA_gyraseB"/>
    <property type="match status" value="1"/>
</dbReference>
<dbReference type="Pfam" id="PF00986">
    <property type="entry name" value="DNA_gyraseB_C"/>
    <property type="match status" value="1"/>
</dbReference>
<dbReference type="Pfam" id="PF02518">
    <property type="entry name" value="HATPase_c"/>
    <property type="match status" value="1"/>
</dbReference>
<dbReference type="Pfam" id="PF01751">
    <property type="entry name" value="Toprim"/>
    <property type="match status" value="1"/>
</dbReference>
<dbReference type="PRINTS" id="PR01159">
    <property type="entry name" value="DNAGYRASEB"/>
</dbReference>
<dbReference type="PRINTS" id="PR00418">
    <property type="entry name" value="TPI2FAMILY"/>
</dbReference>
<dbReference type="SMART" id="SM00387">
    <property type="entry name" value="HATPase_c"/>
    <property type="match status" value="1"/>
</dbReference>
<dbReference type="SMART" id="SM00433">
    <property type="entry name" value="TOP2c"/>
    <property type="match status" value="1"/>
</dbReference>
<dbReference type="SUPFAM" id="SSF55874">
    <property type="entry name" value="ATPase domain of HSP90 chaperone/DNA topoisomerase II/histidine kinase"/>
    <property type="match status" value="1"/>
</dbReference>
<dbReference type="SUPFAM" id="SSF54211">
    <property type="entry name" value="Ribosomal protein S5 domain 2-like"/>
    <property type="match status" value="1"/>
</dbReference>
<dbReference type="SUPFAM" id="SSF56719">
    <property type="entry name" value="Type II DNA topoisomerase"/>
    <property type="match status" value="1"/>
</dbReference>
<dbReference type="PROSITE" id="PS00177">
    <property type="entry name" value="TOPOISOMERASE_II"/>
    <property type="match status" value="1"/>
</dbReference>
<dbReference type="PROSITE" id="PS50880">
    <property type="entry name" value="TOPRIM"/>
    <property type="match status" value="1"/>
</dbReference>
<gene>
    <name evidence="1" type="primary">parE</name>
    <name type="synonym">gyrB</name>
    <name type="ordered locus">BARBAKC583_0899</name>
</gene>
<accession>P94281</accession>
<accession>A1UT81</accession>
<keyword id="KW-0046">Antibiotic resistance</keyword>
<keyword id="KW-0067">ATP-binding</keyword>
<keyword id="KW-0238">DNA-binding</keyword>
<keyword id="KW-0413">Isomerase</keyword>
<keyword id="KW-0460">Magnesium</keyword>
<keyword id="KW-0479">Metal-binding</keyword>
<keyword id="KW-0547">Nucleotide-binding</keyword>
<keyword id="KW-0799">Topoisomerase</keyword>
<protein>
    <recommendedName>
        <fullName evidence="1">DNA topoisomerase 4 subunit B</fullName>
        <ecNumber evidence="1">5.6.2.2</ecNumber>
    </recommendedName>
    <alternativeName>
        <fullName evidence="1">Topoisomerase IV subunit B</fullName>
    </alternativeName>
</protein>
<feature type="chain" id="PRO_0000145295" description="DNA topoisomerase 4 subunit B">
    <location>
        <begin position="1"/>
        <end position="692"/>
    </location>
</feature>
<feature type="domain" description="Toprim" evidence="1">
    <location>
        <begin position="473"/>
        <end position="587"/>
    </location>
</feature>
<feature type="binding site" evidence="1">
    <location>
        <position position="53"/>
    </location>
    <ligand>
        <name>ATP</name>
        <dbReference type="ChEBI" id="CHEBI:30616"/>
    </ligand>
</feature>
<feature type="binding site" evidence="1">
    <location>
        <position position="93"/>
    </location>
    <ligand>
        <name>ATP</name>
        <dbReference type="ChEBI" id="CHEBI:30616"/>
    </ligand>
</feature>
<feature type="binding site" evidence="1">
    <location>
        <position position="120"/>
    </location>
    <ligand>
        <name>ATP</name>
        <dbReference type="ChEBI" id="CHEBI:30616"/>
    </ligand>
</feature>
<feature type="binding site" evidence="1">
    <location>
        <begin position="162"/>
        <end position="168"/>
    </location>
    <ligand>
        <name>ATP</name>
        <dbReference type="ChEBI" id="CHEBI:30616"/>
    </ligand>
</feature>
<feature type="binding site" evidence="1">
    <location>
        <position position="393"/>
    </location>
    <ligand>
        <name>ATP</name>
        <dbReference type="ChEBI" id="CHEBI:30616"/>
    </ligand>
</feature>
<feature type="binding site" evidence="1">
    <location>
        <position position="479"/>
    </location>
    <ligand>
        <name>Mg(2+)</name>
        <dbReference type="ChEBI" id="CHEBI:18420"/>
        <label>1</label>
        <note>catalytic</note>
    </ligand>
</feature>
<feature type="binding site" evidence="1">
    <location>
        <position position="552"/>
    </location>
    <ligand>
        <name>Mg(2+)</name>
        <dbReference type="ChEBI" id="CHEBI:18420"/>
        <label>1</label>
        <note>catalytic</note>
    </ligand>
</feature>
<feature type="binding site" evidence="1">
    <location>
        <position position="552"/>
    </location>
    <ligand>
        <name>Mg(2+)</name>
        <dbReference type="ChEBI" id="CHEBI:18420"/>
        <label>2</label>
    </ligand>
</feature>
<feature type="binding site" evidence="1">
    <location>
        <position position="554"/>
    </location>
    <ligand>
        <name>Mg(2+)</name>
        <dbReference type="ChEBI" id="CHEBI:18420"/>
        <label>2</label>
    </ligand>
</feature>
<feature type="site" description="Interaction with DNA" evidence="1">
    <location>
        <position position="504"/>
    </location>
</feature>
<feature type="site" description="Interaction with DNA" evidence="1">
    <location>
        <position position="507"/>
    </location>
</feature>
<feature type="site" description="Interaction with DNA" evidence="1">
    <location>
        <position position="559"/>
    </location>
</feature>
<feature type="site" description="Interaction with DNA" evidence="1">
    <location>
        <position position="676"/>
    </location>
</feature>
<feature type="sequence variant" description="In coumermycin A1 mutant.">
    <original>G</original>
    <variation>S</variation>
    <location>
        <position position="124"/>
    </location>
</feature>
<feature type="sequence variant" description="In coumermycin A1 mutant.">
    <original>R</original>
    <variation>Q</variation>
    <location>
        <position position="184"/>
    </location>
</feature>
<feature type="sequence variant" description="In coumermycin A1 mutant.">
    <original>T</original>
    <variation>A</variation>
    <location>
        <position position="214"/>
    </location>
</feature>
<feature type="sequence variant" description="In coumermycin A1 mutant.">
    <original>T</original>
    <variation>I</variation>
    <location>
        <position position="214"/>
    </location>
</feature>